<reference key="1">
    <citation type="journal article" date="2006" name="J. Bacteriol.">
        <title>Pathogenomic sequence analysis of Bacillus cereus and Bacillus thuringiensis isolates closely related to Bacillus anthracis.</title>
        <authorList>
            <person name="Han C.S."/>
            <person name="Xie G."/>
            <person name="Challacombe J.F."/>
            <person name="Altherr M.R."/>
            <person name="Bhotika S.S."/>
            <person name="Bruce D."/>
            <person name="Campbell C.S."/>
            <person name="Campbell M.L."/>
            <person name="Chen J."/>
            <person name="Chertkov O."/>
            <person name="Cleland C."/>
            <person name="Dimitrijevic M."/>
            <person name="Doggett N.A."/>
            <person name="Fawcett J.J."/>
            <person name="Glavina T."/>
            <person name="Goodwin L.A."/>
            <person name="Hill K.K."/>
            <person name="Hitchcock P."/>
            <person name="Jackson P.J."/>
            <person name="Keim P."/>
            <person name="Kewalramani A.R."/>
            <person name="Longmire J."/>
            <person name="Lucas S."/>
            <person name="Malfatti S."/>
            <person name="McMurry K."/>
            <person name="Meincke L.J."/>
            <person name="Misra M."/>
            <person name="Moseman B.L."/>
            <person name="Mundt M."/>
            <person name="Munk A.C."/>
            <person name="Okinaka R.T."/>
            <person name="Parson-Quintana B."/>
            <person name="Reilly L.P."/>
            <person name="Richardson P."/>
            <person name="Robinson D.L."/>
            <person name="Rubin E."/>
            <person name="Saunders E."/>
            <person name="Tapia R."/>
            <person name="Tesmer J.G."/>
            <person name="Thayer N."/>
            <person name="Thompson L.S."/>
            <person name="Tice H."/>
            <person name="Ticknor L.O."/>
            <person name="Wills P.L."/>
            <person name="Brettin T.S."/>
            <person name="Gilna P."/>
        </authorList>
    </citation>
    <scope>NUCLEOTIDE SEQUENCE [LARGE SCALE GENOMIC DNA]</scope>
    <source>
        <strain>97-27</strain>
    </source>
</reference>
<evidence type="ECO:0000255" key="1">
    <source>
        <dbReference type="HAMAP-Rule" id="MF_00173"/>
    </source>
</evidence>
<keyword id="KW-0028">Amino-acid biosynthesis</keyword>
<keyword id="KW-0055">Arginine biosynthesis</keyword>
<keyword id="KW-0963">Cytoplasm</keyword>
<keyword id="KW-0238">DNA-binding</keyword>
<keyword id="KW-0678">Repressor</keyword>
<keyword id="KW-0804">Transcription</keyword>
<keyword id="KW-0805">Transcription regulation</keyword>
<proteinExistence type="inferred from homology"/>
<comment type="function">
    <text evidence="1">Regulates arginine biosynthesis genes.</text>
</comment>
<comment type="pathway">
    <text>Amino-acid biosynthesis; L-arginine biosynthesis [regulation].</text>
</comment>
<comment type="subcellular location">
    <subcellularLocation>
        <location evidence="1">Cytoplasm</location>
    </subcellularLocation>
</comment>
<comment type="similarity">
    <text evidence="1">Belongs to the ArgR family.</text>
</comment>
<accession>Q6HDZ0</accession>
<name>ARGR2_BACHK</name>
<gene>
    <name evidence="1" type="primary">argR2</name>
    <name type="ordered locus">BT9727_3917</name>
</gene>
<sequence length="149" mass="16928">MNKGQRHIKIREIIANKEIETQDELVDILRNEGFNVTQATVSRDIKELHLVKVPLHDGRYKYSLPADQRFNPLQKLKRNLVDSFVKLDTAGHMLVLKTLPGNAHSLGALIDHLEWDEIIGTICGDDTCLIICRTPEDTGVVSDRFLNML</sequence>
<feature type="chain" id="PRO_0000205068" description="Arginine repressor">
    <location>
        <begin position="1"/>
        <end position="149"/>
    </location>
</feature>
<dbReference type="EMBL" id="AE017355">
    <property type="protein sequence ID" value="AAT60772.1"/>
    <property type="molecule type" value="Genomic_DNA"/>
</dbReference>
<dbReference type="RefSeq" id="YP_038236.1">
    <property type="nucleotide sequence ID" value="NC_005957.1"/>
</dbReference>
<dbReference type="SMR" id="Q6HDZ0"/>
<dbReference type="KEGG" id="btk:BT9727_3917"/>
<dbReference type="PATRIC" id="fig|281309.8.peg.4180"/>
<dbReference type="HOGENOM" id="CLU_097103_3_0_9"/>
<dbReference type="UniPathway" id="UPA00068"/>
<dbReference type="PRO" id="PR:Q6HDZ0"/>
<dbReference type="Proteomes" id="UP000001301">
    <property type="component" value="Chromosome"/>
</dbReference>
<dbReference type="GO" id="GO:0005737">
    <property type="term" value="C:cytoplasm"/>
    <property type="evidence" value="ECO:0007669"/>
    <property type="project" value="UniProtKB-SubCell"/>
</dbReference>
<dbReference type="GO" id="GO:0034618">
    <property type="term" value="F:arginine binding"/>
    <property type="evidence" value="ECO:0007669"/>
    <property type="project" value="InterPro"/>
</dbReference>
<dbReference type="GO" id="GO:0003677">
    <property type="term" value="F:DNA binding"/>
    <property type="evidence" value="ECO:0007669"/>
    <property type="project" value="UniProtKB-KW"/>
</dbReference>
<dbReference type="GO" id="GO:0003700">
    <property type="term" value="F:DNA-binding transcription factor activity"/>
    <property type="evidence" value="ECO:0007669"/>
    <property type="project" value="UniProtKB-UniRule"/>
</dbReference>
<dbReference type="GO" id="GO:0006526">
    <property type="term" value="P:L-arginine biosynthetic process"/>
    <property type="evidence" value="ECO:0007669"/>
    <property type="project" value="UniProtKB-UniPathway"/>
</dbReference>
<dbReference type="GO" id="GO:0051259">
    <property type="term" value="P:protein complex oligomerization"/>
    <property type="evidence" value="ECO:0007669"/>
    <property type="project" value="InterPro"/>
</dbReference>
<dbReference type="GO" id="GO:1900079">
    <property type="term" value="P:regulation of arginine biosynthetic process"/>
    <property type="evidence" value="ECO:0007669"/>
    <property type="project" value="UniProtKB-UniRule"/>
</dbReference>
<dbReference type="FunFam" id="1.10.10.10:FF:000172">
    <property type="entry name" value="Arginine repressor"/>
    <property type="match status" value="1"/>
</dbReference>
<dbReference type="FunFam" id="3.30.1360.40:FF:000006">
    <property type="entry name" value="Arginine repressor"/>
    <property type="match status" value="1"/>
</dbReference>
<dbReference type="Gene3D" id="3.30.1360.40">
    <property type="match status" value="1"/>
</dbReference>
<dbReference type="Gene3D" id="1.10.10.10">
    <property type="entry name" value="Winged helix-like DNA-binding domain superfamily/Winged helix DNA-binding domain"/>
    <property type="match status" value="1"/>
</dbReference>
<dbReference type="HAMAP" id="MF_00173">
    <property type="entry name" value="Arg_repressor"/>
    <property type="match status" value="1"/>
</dbReference>
<dbReference type="InterPro" id="IPR001669">
    <property type="entry name" value="Arg_repress"/>
</dbReference>
<dbReference type="InterPro" id="IPR020899">
    <property type="entry name" value="Arg_repress_C"/>
</dbReference>
<dbReference type="InterPro" id="IPR036251">
    <property type="entry name" value="Arg_repress_C_sf"/>
</dbReference>
<dbReference type="InterPro" id="IPR020900">
    <property type="entry name" value="Arg_repress_DNA-bd"/>
</dbReference>
<dbReference type="InterPro" id="IPR036388">
    <property type="entry name" value="WH-like_DNA-bd_sf"/>
</dbReference>
<dbReference type="InterPro" id="IPR036390">
    <property type="entry name" value="WH_DNA-bd_sf"/>
</dbReference>
<dbReference type="NCBIfam" id="TIGR01529">
    <property type="entry name" value="argR_whole"/>
    <property type="match status" value="1"/>
</dbReference>
<dbReference type="NCBIfam" id="NF003281">
    <property type="entry name" value="PRK04280.1"/>
    <property type="match status" value="1"/>
</dbReference>
<dbReference type="PANTHER" id="PTHR34471">
    <property type="entry name" value="ARGININE REPRESSOR"/>
    <property type="match status" value="1"/>
</dbReference>
<dbReference type="PANTHER" id="PTHR34471:SF1">
    <property type="entry name" value="ARGININE REPRESSOR"/>
    <property type="match status" value="1"/>
</dbReference>
<dbReference type="Pfam" id="PF01316">
    <property type="entry name" value="Arg_repressor"/>
    <property type="match status" value="1"/>
</dbReference>
<dbReference type="Pfam" id="PF02863">
    <property type="entry name" value="Arg_repressor_C"/>
    <property type="match status" value="1"/>
</dbReference>
<dbReference type="PRINTS" id="PR01467">
    <property type="entry name" value="ARGREPRESSOR"/>
</dbReference>
<dbReference type="SUPFAM" id="SSF55252">
    <property type="entry name" value="C-terminal domain of arginine repressor"/>
    <property type="match status" value="1"/>
</dbReference>
<dbReference type="SUPFAM" id="SSF46785">
    <property type="entry name" value="Winged helix' DNA-binding domain"/>
    <property type="match status" value="1"/>
</dbReference>
<organism>
    <name type="scientific">Bacillus thuringiensis subsp. konkukian (strain 97-27)</name>
    <dbReference type="NCBI Taxonomy" id="281309"/>
    <lineage>
        <taxon>Bacteria</taxon>
        <taxon>Bacillati</taxon>
        <taxon>Bacillota</taxon>
        <taxon>Bacilli</taxon>
        <taxon>Bacillales</taxon>
        <taxon>Bacillaceae</taxon>
        <taxon>Bacillus</taxon>
        <taxon>Bacillus cereus group</taxon>
    </lineage>
</organism>
<protein>
    <recommendedName>
        <fullName evidence="1">Arginine repressor</fullName>
    </recommendedName>
</protein>